<dbReference type="EMBL" id="U53227">
    <property type="protein sequence ID" value="AAB88233.1"/>
    <property type="molecule type" value="Genomic_RNA"/>
</dbReference>
<dbReference type="RefSeq" id="NP_690900.1">
    <property type="nucleotide sequence ID" value="NC_004190.1"/>
</dbReference>
<dbReference type="IntAct" id="Q66262">
    <property type="interactions" value="2"/>
</dbReference>
<dbReference type="GeneID" id="993318"/>
<dbReference type="KEGG" id="vg:993318"/>
<dbReference type="Proteomes" id="UP000001675">
    <property type="component" value="Genome"/>
</dbReference>
<dbReference type="GO" id="GO:0033644">
    <property type="term" value="C:host cell membrane"/>
    <property type="evidence" value="ECO:0007669"/>
    <property type="project" value="UniProtKB-SubCell"/>
</dbReference>
<dbReference type="GO" id="GO:0016020">
    <property type="term" value="C:membrane"/>
    <property type="evidence" value="ECO:0007669"/>
    <property type="project" value="UniProtKB-KW"/>
</dbReference>
<reference key="1">
    <citation type="journal article" date="2004" name="J. Gen. Virol.">
        <title>Termination and read-through proteins encoded by genome segment 9 of Colorado tick fever virus.</title>
        <authorList>
            <person name="Mohd Jaafar F."/>
            <person name="Attoui H."/>
            <person name="De Micco P."/>
            <person name="De Lamballerie X."/>
        </authorList>
    </citation>
    <scope>NUCLEOTIDE SEQUENCE [GENOMIC RNA]</scope>
</reference>
<accession>Q66262</accession>
<proteinExistence type="inferred from homology"/>
<keyword id="KW-1043">Host membrane</keyword>
<keyword id="KW-0472">Membrane</keyword>
<keyword id="KW-1185">Reference proteome</keyword>
<keyword id="KW-0732">Signal</keyword>
<keyword id="KW-0812">Transmembrane</keyword>
<keyword id="KW-1133">Transmembrane helix</keyword>
<organism>
    <name type="scientific">Colorado tick fever virus (strain USA/Florio N-7180)</name>
    <name type="common">CTFV</name>
    <dbReference type="NCBI Taxonomy" id="648168"/>
    <lineage>
        <taxon>Viruses</taxon>
        <taxon>Riboviria</taxon>
        <taxon>Orthornavirae</taxon>
        <taxon>Duplornaviricota</taxon>
        <taxon>Resentoviricetes</taxon>
        <taxon>Reovirales</taxon>
        <taxon>Spinareoviridae</taxon>
        <taxon>Coltivirus</taxon>
        <taxon>Colorado tick fever coltivirus</taxon>
    </lineage>
</organism>
<comment type="subcellular location">
    <subcellularLocation>
        <location evidence="3">Host membrane</location>
        <topology evidence="3">Single-pass membrane protein</topology>
    </subcellularLocation>
</comment>
<name>VP12_CTFVL</name>
<protein>
    <recommendedName>
        <fullName>Uncharacterized protein VP12</fullName>
    </recommendedName>
</protein>
<feature type="signal peptide" evidence="1">
    <location>
        <begin position="1"/>
        <end position="24"/>
    </location>
</feature>
<feature type="chain" id="PRO_0000403201" description="Uncharacterized protein VP12">
    <location>
        <begin position="25"/>
        <end position="185"/>
    </location>
</feature>
<feature type="transmembrane region" description="Helical" evidence="1">
    <location>
        <begin position="50"/>
        <end position="70"/>
    </location>
</feature>
<feature type="region of interest" description="Disordered" evidence="2">
    <location>
        <begin position="96"/>
        <end position="185"/>
    </location>
</feature>
<feature type="compositionally biased region" description="Basic and acidic residues" evidence="2">
    <location>
        <begin position="96"/>
        <end position="113"/>
    </location>
</feature>
<feature type="compositionally biased region" description="Polar residues" evidence="2">
    <location>
        <begin position="114"/>
        <end position="126"/>
    </location>
</feature>
<feature type="compositionally biased region" description="Basic and acidic residues" evidence="2">
    <location>
        <begin position="127"/>
        <end position="138"/>
    </location>
</feature>
<feature type="compositionally biased region" description="Pro residues" evidence="2">
    <location>
        <begin position="139"/>
        <end position="155"/>
    </location>
</feature>
<sequence length="185" mass="20410">MPCNRAVFGAFVLALLISLQSVYFKLYEFYKNNETARNTSVAGFLKRHEVAVNVIVEFSFDILFFLCGLLGFELSPTARRLIFRRTASAEKADTVELEHVSSRRRNDSRDDSTVRNVSKTSPLASQRSRDHFDGDPREPAPPAYSPADFYPPPASPHICETPLSTRVAPSAPSASLFTAGGIGLP</sequence>
<evidence type="ECO:0000255" key="1"/>
<evidence type="ECO:0000256" key="2">
    <source>
        <dbReference type="SAM" id="MobiDB-lite"/>
    </source>
</evidence>
<evidence type="ECO:0000305" key="3"/>
<organismHost>
    <name type="scientific">Callospermophilus lateralis</name>
    <name type="common">Golden-mantled ground squirrel</name>
    <name type="synonym">Spermophilus lateralis</name>
    <dbReference type="NCBI Taxonomy" id="76772"/>
</organismHost>
<organismHost>
    <name type="scientific">Dermacentor andersoni</name>
    <name type="common">Rocky mountain wood tick</name>
    <dbReference type="NCBI Taxonomy" id="34620"/>
</organismHost>
<organismHost>
    <name type="scientific">Erethizon dorsatum</name>
    <name type="common">North American porcupine</name>
    <name type="synonym">Hystrix dorsata</name>
    <dbReference type="NCBI Taxonomy" id="34844"/>
</organismHost>
<organismHost>
    <name type="scientific">Homo sapiens</name>
    <name type="common">Human</name>
    <dbReference type="NCBI Taxonomy" id="9606"/>
</organismHost>
<organismHost>
    <name type="scientific">Neotoma cinerea</name>
    <name type="common">Bushy-tailed woodrat</name>
    <name type="synonym">Mus cinereus</name>
    <dbReference type="NCBI Taxonomy" id="105147"/>
</organismHost>
<organismHost>
    <name type="scientific">Peromyscus maniculatus</name>
    <name type="common">North American deer mouse</name>
    <dbReference type="NCBI Taxonomy" id="10042"/>
</organismHost>